<keyword id="KW-0002">3D-structure</keyword>
<keyword id="KW-0119">Carbohydrate metabolism</keyword>
<keyword id="KW-0328">Glycosyltransferase</keyword>
<keyword id="KW-0808">Transferase</keyword>
<organism>
    <name type="scientific">Pseudomonas syringae pv. actinidiae</name>
    <dbReference type="NCBI Taxonomy" id="103796"/>
    <lineage>
        <taxon>Bacteria</taxon>
        <taxon>Pseudomonadati</taxon>
        <taxon>Pseudomonadota</taxon>
        <taxon>Gammaproteobacteria</taxon>
        <taxon>Pseudomonadales</taxon>
        <taxon>Pseudomonadaceae</taxon>
        <taxon>Pseudomonas</taxon>
        <taxon>Pseudomonas syringae</taxon>
    </lineage>
</organism>
<comment type="function">
    <text evidence="2">Catalyzes the synthesis of levan, a fructose polymer, by transferring the fructosyl moiety from sucrose to a growing acceptor molecule (PubMed:33675829). Also displays sucrose hydrolase activity (PubMed:33675829).</text>
</comment>
<comment type="catalytic activity">
    <reaction evidence="2">
        <text>[6)-beta-D-fructofuranosyl-(2-&gt;](n) alpha-D-glucopyranoside + sucrose = [6)-beta-D-fructofuranosyl-(2-&gt;](n+1) alpha-D-glucopyranoside + D-glucose</text>
        <dbReference type="Rhea" id="RHEA:13653"/>
        <dbReference type="Rhea" id="RHEA-COMP:13093"/>
        <dbReference type="Rhea" id="RHEA-COMP:13094"/>
        <dbReference type="ChEBI" id="CHEBI:4167"/>
        <dbReference type="ChEBI" id="CHEBI:17992"/>
        <dbReference type="ChEBI" id="CHEBI:134464"/>
        <dbReference type="EC" id="2.4.1.10"/>
    </reaction>
</comment>
<comment type="activity regulation">
    <text evidence="2">Sucrose hydrolase activity is negatively affected by salt concentration (PubMed:33675829). The levan polymerization rate is constant regardless of sucrose concentration (PubMed:33675829).</text>
</comment>
<comment type="biophysicochemical properties">
    <kinetics>
        <KM evidence="2">54.1 mM for sucrose (at pH 5.0)</KM>
        <KM evidence="2">100.1 mM for sucrose (at pH 7.0)</KM>
        <text evidence="2">kcat is 8500 min(-1) with sucrose as substrate (at pH 5.0). kcat is 15000 min(-1) with sucrose as substrate (at pH 7.0).</text>
    </kinetics>
    <phDependence>
        <text evidence="2">For sucrose hydrolase activity, shows the maximal activity in the 5-7 pH range, while the activity decreases at pH values lower that 5 and higher than 8 (PubMed:33675829). Levan polymerization occurs mainly at pH 5.0 (PubMed:33675829).</text>
    </phDependence>
    <temperatureDependence>
        <text evidence="2">Highly thermostable (PubMed:33675829). At pH 5.0, sucrose hydrolase activity progressively increases with temperature until 55 degrees Celsius and then falls quickly (PubMed:33675829). At ph 7.0, the sucrose hydrolase activity increases rapidly passing from 4 to 15 degrees Celsius and remains constant up to 55 degrees Celsius (PubMed:33675829).</text>
    </temperatureDependence>
</comment>
<comment type="subunit">
    <text evidence="2">Homodimer.</text>
</comment>
<comment type="induction">
    <text evidence="2">Highly expressed at the end of the exponential phase of growth.</text>
</comment>
<comment type="miscellaneous">
    <text evidence="2">Strain KL103 contains two functional levansucrases, Lscbeta and Lscgamma (PubMed:33675829). A third copy, lscalpha, is non-coding because of a premature stop codon (PubMed:33675829). Lscbeta and Lscgamma show different sucrose splitting and polymerization properties, and differential expression, suggesting two distinct roles in the physiology of the bacterium (PubMed:33675829).</text>
</comment>
<comment type="similarity">
    <text evidence="4">Belongs to the glycosyl hydrolase 68 family.</text>
</comment>
<gene>
    <name evidence="3" type="primary">lscbeta</name>
    <name evidence="5" type="ORF">KPSA3_07534</name>
</gene>
<feature type="chain" id="PRO_0000459748" description="Levansucrase Lscbeta">
    <location>
        <begin position="1"/>
        <end position="431"/>
    </location>
</feature>
<feature type="active site" description="Nucleophile" evidence="1">
    <location>
        <position position="62"/>
    </location>
</feature>
<feature type="active site" description="Proton donor/acceptor" evidence="1">
    <location>
        <position position="303"/>
    </location>
</feature>
<feature type="binding site" evidence="1">
    <location>
        <position position="61"/>
    </location>
    <ligand>
        <name>sucrose</name>
        <dbReference type="ChEBI" id="CHEBI:17992"/>
    </ligand>
</feature>
<feature type="binding site" evidence="1">
    <location>
        <position position="62"/>
    </location>
    <ligand>
        <name>sucrose</name>
        <dbReference type="ChEBI" id="CHEBI:17992"/>
    </ligand>
</feature>
<feature type="binding site" evidence="1">
    <location>
        <position position="148"/>
    </location>
    <ligand>
        <name>sucrose</name>
        <dbReference type="ChEBI" id="CHEBI:17992"/>
    </ligand>
</feature>
<feature type="binding site" evidence="1">
    <location>
        <position position="218"/>
    </location>
    <ligand>
        <name>sucrose</name>
        <dbReference type="ChEBI" id="CHEBI:17992"/>
    </ligand>
</feature>
<feature type="binding site" evidence="1">
    <location>
        <position position="219"/>
    </location>
    <ligand>
        <name>sucrose</name>
        <dbReference type="ChEBI" id="CHEBI:17992"/>
    </ligand>
</feature>
<feature type="site" description="Transition state stabilizer" evidence="1">
    <location>
        <position position="219"/>
    </location>
</feature>
<accession>A0A2V0R8Q9</accession>
<name>LSCB_PSESF</name>
<reference key="1">
    <citation type="submission" date="2018-04" db="EMBL/GenBank/DDBJ databases">
        <title>Draft genome sequence of Pseudomonas syringae pv. actinidiae biovar 3 strains isolated from kiwifruit in Kagawa prefecture.</title>
        <authorList>
            <person name="Tabuchi M."/>
            <person name="Saito M."/>
            <person name="Fujiwara S."/>
            <person name="Sasa N."/>
            <person name="Akimitsu K."/>
            <person name="Gomi K."/>
            <person name="Konishi-Sugita S."/>
            <person name="Hamano K."/>
            <person name="Kataoka I."/>
        </authorList>
    </citation>
    <scope>NUCLEOTIDE SEQUENCE [LARGE SCALE GENOMIC DNA]</scope>
    <source>
        <strain>MAFF212211</strain>
    </source>
</reference>
<reference key="2">
    <citation type="journal article" date="2021" name="Int. J. Biol. Macromol.">
        <title>Lscbeta and lscgamma, two novel levansucrases of Pseudomonas syringae pv. actinidiae biovar 3, the causal agent of bacterial canker of kiwifruit, show different enzymatic properties.</title>
        <authorList>
            <person name="Luti S."/>
            <person name="Campigli S."/>
            <person name="Ranaldi F."/>
            <person name="Paoli P."/>
            <person name="Pazzagli L."/>
            <person name="Marchi G."/>
        </authorList>
    </citation>
    <scope>FUNCTION</scope>
    <scope>CATALYTIC ACTIVITY</scope>
    <scope>ACTIVITY REGULATION</scope>
    <scope>BIOPHYSICOCHEMICAL PROPERTIES</scope>
    <scope>SUBUNIT</scope>
    <scope>INDUCTION</scope>
    <scope>IDENTIFICATION BY MASS SPECTROMETRY</scope>
    <source>
        <strain>KL103 / Biovar 3</strain>
    </source>
</reference>
<proteinExistence type="evidence at protein level"/>
<sequence>MSTSSSALSQLKNSPLAGNINYEPTVWSRADALKVNENDPTTTQPLVSADFPVMSDTVFIWDTMPLRELDGTVVSVNGWSVILTLTADRHPDDPQYLDANGRYDIKRDWEDRHGRARMCYWYSRTGKDWIFGGRVMAEGVSPTTREWAGTPILLNDKGDIDLYYTCVTPGAAIAKVRGRIVTSDQGVELKDFTQVKKLFEADGTYYQTEAQNSSWNFRDPSPFIDPNDGKLYMVFEGNVAGERGSHTVGAAELGPVPPGHEDVGGARFQVGCIGLAVAKDLSGEEWEILPPLVTAVGVNDQTERPHYIFQDGKYYLFTISHKFTYAEGLEGPDGVYGFVGEHLFGPYRPMNASGLVLGNPPEQPFQTYSHCVMPNGLVTSFIDSVPTDGEDYRIGGTEAPTVRIVLKGDRSFVQEEYDYGYIPAMKDVQLS</sequence>
<evidence type="ECO:0000250" key="1">
    <source>
        <dbReference type="UniProtKB" id="P05655"/>
    </source>
</evidence>
<evidence type="ECO:0000269" key="2">
    <source>
    </source>
</evidence>
<evidence type="ECO:0000303" key="3">
    <source>
    </source>
</evidence>
<evidence type="ECO:0000305" key="4"/>
<evidence type="ECO:0000312" key="5">
    <source>
        <dbReference type="EMBL" id="GBH21487.1"/>
    </source>
</evidence>
<protein>
    <recommendedName>
        <fullName evidence="3">Levansucrase Lscbeta</fullName>
        <ecNumber evidence="2">2.4.1.10</ecNumber>
    </recommendedName>
    <alternativeName>
        <fullName evidence="4">Sucrose 6-fructosyltransferase</fullName>
    </alternativeName>
</protein>
<dbReference type="EC" id="2.4.1.10" evidence="2"/>
<dbReference type="EMBL" id="BGKA01000296">
    <property type="protein sequence ID" value="GBH21487.1"/>
    <property type="molecule type" value="Genomic_DNA"/>
</dbReference>
<dbReference type="RefSeq" id="WP_017684964.1">
    <property type="nucleotide sequence ID" value="NZ_PGSZ01000025.1"/>
</dbReference>
<dbReference type="PDB" id="8QJ5">
    <property type="method" value="X-ray"/>
    <property type="resolution" value="1.63 A"/>
    <property type="chains" value="A/B=1-431"/>
</dbReference>
<dbReference type="PDB" id="8QKW">
    <property type="method" value="X-ray"/>
    <property type="resolution" value="1.65 A"/>
    <property type="chains" value="A=1-431"/>
</dbReference>
<dbReference type="PDBsum" id="8QJ5"/>
<dbReference type="PDBsum" id="8QKW"/>
<dbReference type="SMR" id="A0A2V0R8Q9"/>
<dbReference type="Proteomes" id="UP000248291">
    <property type="component" value="Unassembled WGS sequence"/>
</dbReference>
<dbReference type="GO" id="GO:0050053">
    <property type="term" value="F:levansucrase activity"/>
    <property type="evidence" value="ECO:0007669"/>
    <property type="project" value="InterPro"/>
</dbReference>
<dbReference type="GO" id="GO:0009758">
    <property type="term" value="P:carbohydrate utilization"/>
    <property type="evidence" value="ECO:0007669"/>
    <property type="project" value="InterPro"/>
</dbReference>
<dbReference type="CDD" id="cd08997">
    <property type="entry name" value="GH68"/>
    <property type="match status" value="1"/>
</dbReference>
<dbReference type="FunFam" id="2.115.10.20:FF:000007">
    <property type="entry name" value="Levansucrase LscB"/>
    <property type="match status" value="1"/>
</dbReference>
<dbReference type="Gene3D" id="2.115.10.20">
    <property type="entry name" value="Glycosyl hydrolase domain, family 43"/>
    <property type="match status" value="1"/>
</dbReference>
<dbReference type="InterPro" id="IPR003469">
    <property type="entry name" value="Glyco_hydro_68"/>
</dbReference>
<dbReference type="InterPro" id="IPR023296">
    <property type="entry name" value="Glyco_hydro_beta-prop_sf"/>
</dbReference>
<dbReference type="Pfam" id="PF02435">
    <property type="entry name" value="Glyco_hydro_68"/>
    <property type="match status" value="1"/>
</dbReference>
<dbReference type="SUPFAM" id="SSF75005">
    <property type="entry name" value="Arabinanase/levansucrase/invertase"/>
    <property type="match status" value="1"/>
</dbReference>